<feature type="chain" id="PRO_1000121618" description="Large ribosomal subunit protein bL28">
    <location>
        <begin position="1"/>
        <end position="77"/>
    </location>
</feature>
<protein>
    <recommendedName>
        <fullName evidence="1">Large ribosomal subunit protein bL28</fullName>
    </recommendedName>
    <alternativeName>
        <fullName evidence="2">50S ribosomal protein L28</fullName>
    </alternativeName>
</protein>
<dbReference type="EMBL" id="CP000884">
    <property type="protein sequence ID" value="ABX37994.1"/>
    <property type="molecule type" value="Genomic_DNA"/>
</dbReference>
<dbReference type="RefSeq" id="WP_012207163.1">
    <property type="nucleotide sequence ID" value="NC_010002.1"/>
</dbReference>
<dbReference type="SMR" id="A9BNU9"/>
<dbReference type="STRING" id="398578.Daci_5365"/>
<dbReference type="GeneID" id="94690633"/>
<dbReference type="KEGG" id="dac:Daci_5365"/>
<dbReference type="eggNOG" id="COG0227">
    <property type="taxonomic scope" value="Bacteria"/>
</dbReference>
<dbReference type="HOGENOM" id="CLU_064548_3_1_4"/>
<dbReference type="Proteomes" id="UP000000784">
    <property type="component" value="Chromosome"/>
</dbReference>
<dbReference type="GO" id="GO:0022625">
    <property type="term" value="C:cytosolic large ribosomal subunit"/>
    <property type="evidence" value="ECO:0007669"/>
    <property type="project" value="TreeGrafter"/>
</dbReference>
<dbReference type="GO" id="GO:0003735">
    <property type="term" value="F:structural constituent of ribosome"/>
    <property type="evidence" value="ECO:0007669"/>
    <property type="project" value="InterPro"/>
</dbReference>
<dbReference type="GO" id="GO:0006412">
    <property type="term" value="P:translation"/>
    <property type="evidence" value="ECO:0007669"/>
    <property type="project" value="UniProtKB-UniRule"/>
</dbReference>
<dbReference type="FunFam" id="2.30.170.40:FF:000001">
    <property type="entry name" value="50S ribosomal protein L28"/>
    <property type="match status" value="1"/>
</dbReference>
<dbReference type="Gene3D" id="2.30.170.40">
    <property type="entry name" value="Ribosomal protein L28/L24"/>
    <property type="match status" value="1"/>
</dbReference>
<dbReference type="HAMAP" id="MF_00373">
    <property type="entry name" value="Ribosomal_bL28"/>
    <property type="match status" value="1"/>
</dbReference>
<dbReference type="InterPro" id="IPR026569">
    <property type="entry name" value="Ribosomal_bL28"/>
</dbReference>
<dbReference type="InterPro" id="IPR034704">
    <property type="entry name" value="Ribosomal_bL28/bL31-like_sf"/>
</dbReference>
<dbReference type="InterPro" id="IPR001383">
    <property type="entry name" value="Ribosomal_bL28_bact-type"/>
</dbReference>
<dbReference type="InterPro" id="IPR037147">
    <property type="entry name" value="Ribosomal_bL28_sf"/>
</dbReference>
<dbReference type="NCBIfam" id="TIGR00009">
    <property type="entry name" value="L28"/>
    <property type="match status" value="1"/>
</dbReference>
<dbReference type="PANTHER" id="PTHR13528">
    <property type="entry name" value="39S RIBOSOMAL PROTEIN L28, MITOCHONDRIAL"/>
    <property type="match status" value="1"/>
</dbReference>
<dbReference type="PANTHER" id="PTHR13528:SF2">
    <property type="entry name" value="LARGE RIBOSOMAL SUBUNIT PROTEIN BL28M"/>
    <property type="match status" value="1"/>
</dbReference>
<dbReference type="Pfam" id="PF00830">
    <property type="entry name" value="Ribosomal_L28"/>
    <property type="match status" value="1"/>
</dbReference>
<dbReference type="SUPFAM" id="SSF143800">
    <property type="entry name" value="L28p-like"/>
    <property type="match status" value="1"/>
</dbReference>
<accession>A9BNU9</accession>
<reference key="1">
    <citation type="submission" date="2007-11" db="EMBL/GenBank/DDBJ databases">
        <title>Complete sequence of Delftia acidovorans DSM 14801 / SPH-1.</title>
        <authorList>
            <person name="Copeland A."/>
            <person name="Lucas S."/>
            <person name="Lapidus A."/>
            <person name="Barry K."/>
            <person name="Glavina del Rio T."/>
            <person name="Dalin E."/>
            <person name="Tice H."/>
            <person name="Pitluck S."/>
            <person name="Lowry S."/>
            <person name="Clum A."/>
            <person name="Schmutz J."/>
            <person name="Larimer F."/>
            <person name="Land M."/>
            <person name="Hauser L."/>
            <person name="Kyrpides N."/>
            <person name="Kim E."/>
            <person name="Schleheck D."/>
            <person name="Richardson P."/>
        </authorList>
    </citation>
    <scope>NUCLEOTIDE SEQUENCE [LARGE SCALE GENOMIC DNA]</scope>
    <source>
        <strain>DSM 14801 / SPH-1</strain>
    </source>
</reference>
<name>RL28_DELAS</name>
<gene>
    <name evidence="1" type="primary">rpmB</name>
    <name type="ordered locus">Daci_5365</name>
</gene>
<sequence>MARVCEVTGKKPMVGNNVSHANNKTKRRFLPNLQYRRFWVESENRWVRLRVSSAALRLIDKNGIDSVLADLRARGQA</sequence>
<evidence type="ECO:0000255" key="1">
    <source>
        <dbReference type="HAMAP-Rule" id="MF_00373"/>
    </source>
</evidence>
<evidence type="ECO:0000305" key="2"/>
<keyword id="KW-1185">Reference proteome</keyword>
<keyword id="KW-0687">Ribonucleoprotein</keyword>
<keyword id="KW-0689">Ribosomal protein</keyword>
<organism>
    <name type="scientific">Delftia acidovorans (strain DSM 14801 / SPH-1)</name>
    <dbReference type="NCBI Taxonomy" id="398578"/>
    <lineage>
        <taxon>Bacteria</taxon>
        <taxon>Pseudomonadati</taxon>
        <taxon>Pseudomonadota</taxon>
        <taxon>Betaproteobacteria</taxon>
        <taxon>Burkholderiales</taxon>
        <taxon>Comamonadaceae</taxon>
        <taxon>Delftia</taxon>
    </lineage>
</organism>
<comment type="similarity">
    <text evidence="1">Belongs to the bacterial ribosomal protein bL28 family.</text>
</comment>
<proteinExistence type="inferred from homology"/>